<dbReference type="EC" id="1.4.99.-" evidence="1"/>
<dbReference type="EMBL" id="CP000489">
    <property type="protein sequence ID" value="ABL68916.1"/>
    <property type="molecule type" value="Genomic_DNA"/>
</dbReference>
<dbReference type="RefSeq" id="WP_011747144.1">
    <property type="nucleotide sequence ID" value="NC_008686.1"/>
</dbReference>
<dbReference type="SMR" id="A1B072"/>
<dbReference type="STRING" id="318586.Pden_0804"/>
<dbReference type="EnsemblBacteria" id="ABL68916">
    <property type="protein sequence ID" value="ABL68916"/>
    <property type="gene ID" value="Pden_0804"/>
</dbReference>
<dbReference type="GeneID" id="93452029"/>
<dbReference type="KEGG" id="pde:Pden_0804"/>
<dbReference type="eggNOG" id="COG0665">
    <property type="taxonomic scope" value="Bacteria"/>
</dbReference>
<dbReference type="HOGENOM" id="CLU_007884_9_2_5"/>
<dbReference type="OrthoDB" id="9805337at2"/>
<dbReference type="UniPathway" id="UPA00043">
    <property type="reaction ID" value="UER00498"/>
</dbReference>
<dbReference type="Proteomes" id="UP000000361">
    <property type="component" value="Chromosome 1"/>
</dbReference>
<dbReference type="GO" id="GO:0005737">
    <property type="term" value="C:cytoplasm"/>
    <property type="evidence" value="ECO:0007669"/>
    <property type="project" value="TreeGrafter"/>
</dbReference>
<dbReference type="GO" id="GO:0005886">
    <property type="term" value="C:plasma membrane"/>
    <property type="evidence" value="ECO:0007669"/>
    <property type="project" value="TreeGrafter"/>
</dbReference>
<dbReference type="GO" id="GO:0008718">
    <property type="term" value="F:D-amino-acid dehydrogenase activity"/>
    <property type="evidence" value="ECO:0007669"/>
    <property type="project" value="UniProtKB-UniRule"/>
</dbReference>
<dbReference type="GO" id="GO:0055130">
    <property type="term" value="P:D-alanine catabolic process"/>
    <property type="evidence" value="ECO:0007669"/>
    <property type="project" value="UniProtKB-UniPathway"/>
</dbReference>
<dbReference type="FunFam" id="3.50.50.60:FF:000020">
    <property type="entry name" value="D-amino acid dehydrogenase"/>
    <property type="match status" value="1"/>
</dbReference>
<dbReference type="Gene3D" id="3.30.9.10">
    <property type="entry name" value="D-Amino Acid Oxidase, subunit A, domain 2"/>
    <property type="match status" value="1"/>
</dbReference>
<dbReference type="Gene3D" id="3.50.50.60">
    <property type="entry name" value="FAD/NAD(P)-binding domain"/>
    <property type="match status" value="2"/>
</dbReference>
<dbReference type="HAMAP" id="MF_01202">
    <property type="entry name" value="DadA"/>
    <property type="match status" value="1"/>
</dbReference>
<dbReference type="InterPro" id="IPR023080">
    <property type="entry name" value="DadA"/>
</dbReference>
<dbReference type="InterPro" id="IPR006076">
    <property type="entry name" value="FAD-dep_OxRdtase"/>
</dbReference>
<dbReference type="InterPro" id="IPR036188">
    <property type="entry name" value="FAD/NAD-bd_sf"/>
</dbReference>
<dbReference type="NCBIfam" id="NF001933">
    <property type="entry name" value="PRK00711.1"/>
    <property type="match status" value="1"/>
</dbReference>
<dbReference type="PANTHER" id="PTHR13847:SF280">
    <property type="entry name" value="D-AMINO ACID DEHYDROGENASE"/>
    <property type="match status" value="1"/>
</dbReference>
<dbReference type="PANTHER" id="PTHR13847">
    <property type="entry name" value="SARCOSINE DEHYDROGENASE-RELATED"/>
    <property type="match status" value="1"/>
</dbReference>
<dbReference type="Pfam" id="PF01266">
    <property type="entry name" value="DAO"/>
    <property type="match status" value="1"/>
</dbReference>
<dbReference type="SUPFAM" id="SSF54373">
    <property type="entry name" value="FAD-linked reductases, C-terminal domain"/>
    <property type="match status" value="1"/>
</dbReference>
<dbReference type="SUPFAM" id="SSF51905">
    <property type="entry name" value="FAD/NAD(P)-binding domain"/>
    <property type="match status" value="1"/>
</dbReference>
<sequence length="433" mass="46754">MKIVVLGAGVLGVTSAWYLAKAGHEVTVIDRQEGPALETSFANAGEISPGYSSPWAAPGVPLKALKWMFQRHAPLVVQPRLDWQRVSWMARMLANCTSSAYAVNKSRMVRLAEYSRDCLGELRAETGIRYDERTQGTLQVFRKQQQLDAAGKDIEVLRADGVPFEVLDRDGCVAAEPGLAGSAERIVGGLRLPGDETGDCFLFTNRLAEMATEAGVTFRWGVSIEALEAEGGRISAVRTDKGRLTADRYVLAMGSYSPRMVRHLGLKLPVYPLKGYSLTIDIQDESRAPVSTVMDETYKVAITRLGDRIRVGGLAEIAGYDLSLNPRRKETLAKSVGELFGGAGDAEQALFWTGLRPMTPDGTPIVGATPIPNLYLNTGHGTLGWTMSAGSGRLIADLISGRKPDIAAEDLGYARYMRGAKAAGRPALQPARA</sequence>
<protein>
    <recommendedName>
        <fullName evidence="1">D-amino acid dehydrogenase</fullName>
        <ecNumber evidence="1">1.4.99.-</ecNumber>
    </recommendedName>
</protein>
<comment type="function">
    <text evidence="1">Oxidative deamination of D-amino acids.</text>
</comment>
<comment type="catalytic activity">
    <reaction evidence="1">
        <text>a D-alpha-amino acid + A + H2O = a 2-oxocarboxylate + AH2 + NH4(+)</text>
        <dbReference type="Rhea" id="RHEA:18125"/>
        <dbReference type="ChEBI" id="CHEBI:13193"/>
        <dbReference type="ChEBI" id="CHEBI:15377"/>
        <dbReference type="ChEBI" id="CHEBI:17499"/>
        <dbReference type="ChEBI" id="CHEBI:28938"/>
        <dbReference type="ChEBI" id="CHEBI:35179"/>
        <dbReference type="ChEBI" id="CHEBI:59871"/>
    </reaction>
</comment>
<comment type="cofactor">
    <cofactor evidence="1">
        <name>FAD</name>
        <dbReference type="ChEBI" id="CHEBI:57692"/>
    </cofactor>
</comment>
<comment type="pathway">
    <text>Amino-acid degradation; D-alanine degradation; NH(3) and pyruvate from D-alanine: step 1/1.</text>
</comment>
<comment type="similarity">
    <text evidence="1">Belongs to the DadA oxidoreductase family.</text>
</comment>
<evidence type="ECO:0000255" key="1">
    <source>
        <dbReference type="HAMAP-Rule" id="MF_01202"/>
    </source>
</evidence>
<keyword id="KW-0274">FAD</keyword>
<keyword id="KW-0285">Flavoprotein</keyword>
<keyword id="KW-0560">Oxidoreductase</keyword>
<keyword id="KW-1185">Reference proteome</keyword>
<proteinExistence type="inferred from homology"/>
<gene>
    <name evidence="1" type="primary">dadA</name>
    <name type="ordered locus">Pden_0804</name>
</gene>
<organism>
    <name type="scientific">Paracoccus denitrificans (strain Pd 1222)</name>
    <dbReference type="NCBI Taxonomy" id="318586"/>
    <lineage>
        <taxon>Bacteria</taxon>
        <taxon>Pseudomonadati</taxon>
        <taxon>Pseudomonadota</taxon>
        <taxon>Alphaproteobacteria</taxon>
        <taxon>Rhodobacterales</taxon>
        <taxon>Paracoccaceae</taxon>
        <taxon>Paracoccus</taxon>
    </lineage>
</organism>
<name>DADA_PARDP</name>
<accession>A1B072</accession>
<reference key="1">
    <citation type="submission" date="2006-12" db="EMBL/GenBank/DDBJ databases">
        <title>Complete sequence of chromosome 1 of Paracoccus denitrificans PD1222.</title>
        <authorList>
            <person name="Copeland A."/>
            <person name="Lucas S."/>
            <person name="Lapidus A."/>
            <person name="Barry K."/>
            <person name="Detter J.C."/>
            <person name="Glavina del Rio T."/>
            <person name="Hammon N."/>
            <person name="Israni S."/>
            <person name="Dalin E."/>
            <person name="Tice H."/>
            <person name="Pitluck S."/>
            <person name="Munk A.C."/>
            <person name="Brettin T."/>
            <person name="Bruce D."/>
            <person name="Han C."/>
            <person name="Tapia R."/>
            <person name="Gilna P."/>
            <person name="Schmutz J."/>
            <person name="Larimer F."/>
            <person name="Land M."/>
            <person name="Hauser L."/>
            <person name="Kyrpides N."/>
            <person name="Lykidis A."/>
            <person name="Spiro S."/>
            <person name="Richardson D.J."/>
            <person name="Moir J.W.B."/>
            <person name="Ferguson S.J."/>
            <person name="van Spanning R.J.M."/>
            <person name="Richardson P."/>
        </authorList>
    </citation>
    <scope>NUCLEOTIDE SEQUENCE [LARGE SCALE GENOMIC DNA]</scope>
    <source>
        <strain>Pd 1222</strain>
    </source>
</reference>
<feature type="chain" id="PRO_1000066103" description="D-amino acid dehydrogenase">
    <location>
        <begin position="1"/>
        <end position="433"/>
    </location>
</feature>
<feature type="binding site" evidence="1">
    <location>
        <begin position="3"/>
        <end position="17"/>
    </location>
    <ligand>
        <name>FAD</name>
        <dbReference type="ChEBI" id="CHEBI:57692"/>
    </ligand>
</feature>